<accession>Q45222</accession>
<dbReference type="EMBL" id="U12678">
    <property type="protein sequence ID" value="AAC28896.1"/>
    <property type="molecule type" value="Genomic_DNA"/>
</dbReference>
<dbReference type="EMBL" id="BA000040">
    <property type="protein sequence ID" value="BAC47415.1"/>
    <property type="molecule type" value="Genomic_DNA"/>
</dbReference>
<dbReference type="PIR" id="I40215">
    <property type="entry name" value="I40215"/>
</dbReference>
<dbReference type="RefSeq" id="NP_768790.1">
    <property type="nucleotide sequence ID" value="NC_004463.1"/>
</dbReference>
<dbReference type="RefSeq" id="WP_011084944.1">
    <property type="nucleotide sequence ID" value="NZ_CP011360.1"/>
</dbReference>
<dbReference type="PDB" id="4W4R">
    <property type="method" value="X-ray"/>
    <property type="resolution" value="1.92 A"/>
    <property type="chains" value="A/B=1-300"/>
</dbReference>
<dbReference type="PDB" id="4W4S">
    <property type="method" value="X-ray"/>
    <property type="resolution" value="2.00 A"/>
    <property type="chains" value="A/B=1-300"/>
</dbReference>
<dbReference type="PDB" id="4XLX">
    <property type="method" value="X-ray"/>
    <property type="resolution" value="2.00 A"/>
    <property type="chains" value="A/B/C/D=1-300"/>
</dbReference>
<dbReference type="PDB" id="4XLY">
    <property type="method" value="X-ray"/>
    <property type="resolution" value="1.82 A"/>
    <property type="chains" value="A/B=1-300"/>
</dbReference>
<dbReference type="PDBsum" id="4W4R"/>
<dbReference type="PDBsum" id="4W4S"/>
<dbReference type="PDBsum" id="4XLX"/>
<dbReference type="PDBsum" id="4XLY"/>
<dbReference type="SMR" id="Q45222"/>
<dbReference type="STRING" id="224911.AAV28_07595"/>
<dbReference type="EnsemblBacteria" id="BAC47415">
    <property type="protein sequence ID" value="BAC47415"/>
    <property type="gene ID" value="BAC47415"/>
</dbReference>
<dbReference type="KEGG" id="bja:blr2150"/>
<dbReference type="PATRIC" id="fig|224911.44.peg.1666"/>
<dbReference type="eggNOG" id="ENOG502Z7Z2">
    <property type="taxonomic scope" value="Bacteria"/>
</dbReference>
<dbReference type="HOGENOM" id="CLU_936486_0_0_5"/>
<dbReference type="InParanoid" id="Q45222"/>
<dbReference type="OrthoDB" id="8195780at2"/>
<dbReference type="BRENDA" id="4.2.3.19">
    <property type="organism ID" value="14426"/>
</dbReference>
<dbReference type="EvolutionaryTrace" id="Q45222"/>
<dbReference type="Proteomes" id="UP000002526">
    <property type="component" value="Chromosome"/>
</dbReference>
<dbReference type="Gene3D" id="1.10.600.10">
    <property type="entry name" value="Farnesyl Diphosphate Synthase"/>
    <property type="match status" value="1"/>
</dbReference>
<dbReference type="InterPro" id="IPR008949">
    <property type="entry name" value="Isoprenoid_synthase_dom_sf"/>
</dbReference>
<dbReference type="Pfam" id="PF19086">
    <property type="entry name" value="Terpene_syn_C_2"/>
    <property type="match status" value="1"/>
</dbReference>
<dbReference type="SUPFAM" id="SSF48576">
    <property type="entry name" value="Terpenoid synthases"/>
    <property type="match status" value="1"/>
</dbReference>
<gene>
    <name type="ordered locus">blr2150</name>
</gene>
<reference key="1">
    <citation type="journal article" date="1993" name="Appl. Environ. Microbiol.">
        <title>Cloning and mutagenesis of a cytochrome P-450 locus from Bradyrhizobium japonicum that is expressed anaerobically and symbiotically.</title>
        <authorList>
            <person name="Tully R.E."/>
            <person name="Keister D.L."/>
        </authorList>
    </citation>
    <scope>NUCLEOTIDE SEQUENCE [GENOMIC DNA]</scope>
    <source>
        <strain>JCM 10833 / BCRC 13528 / IAM 13628 / NBRC 14792 / USDA 110</strain>
    </source>
</reference>
<reference key="2">
    <citation type="journal article" date="1998" name="Biochim. Biophys. Acta">
        <title>Identification and sequencing of a cytochrome P450 gene cluster from Bradyrhizobium japonicum.</title>
        <authorList>
            <person name="Tully R.E."/>
            <person name="van Berkum P."/>
            <person name="Lovins K.W."/>
            <person name="Keister D.L."/>
        </authorList>
    </citation>
    <scope>NUCLEOTIDE SEQUENCE [GENOMIC DNA]</scope>
    <source>
        <strain>JCM 10833 / BCRC 13528 / IAM 13628 / NBRC 14792 / USDA 110</strain>
    </source>
</reference>
<reference key="3">
    <citation type="journal article" date="2002" name="DNA Res.">
        <title>Complete genomic sequence of nitrogen-fixing symbiotic bacterium Bradyrhizobium japonicum USDA110.</title>
        <authorList>
            <person name="Kaneko T."/>
            <person name="Nakamura Y."/>
            <person name="Sato S."/>
            <person name="Minamisawa K."/>
            <person name="Uchiumi T."/>
            <person name="Sasamoto S."/>
            <person name="Watanabe A."/>
            <person name="Idesawa K."/>
            <person name="Iriguchi M."/>
            <person name="Kawashima K."/>
            <person name="Kohara M."/>
            <person name="Matsumoto M."/>
            <person name="Shimpo S."/>
            <person name="Tsuruoka H."/>
            <person name="Wada T."/>
            <person name="Yamada M."/>
            <person name="Tabata S."/>
        </authorList>
    </citation>
    <scope>NUCLEOTIDE SEQUENCE [LARGE SCALE GENOMIC DNA]</scope>
    <source>
        <strain>JCM 10833 / BCRC 13528 / IAM 13628 / NBRC 14792 / USDA 110</strain>
    </source>
</reference>
<evidence type="ECO:0007829" key="1">
    <source>
        <dbReference type="PDB" id="4W4R"/>
    </source>
</evidence>
<evidence type="ECO:0007829" key="2">
    <source>
        <dbReference type="PDB" id="4XLY"/>
    </source>
</evidence>
<organism>
    <name type="scientific">Bradyrhizobium diazoefficiens (strain JCM 10833 / BCRC 13528 / IAM 13628 / NBRC 14792 / USDA 110)</name>
    <dbReference type="NCBI Taxonomy" id="224911"/>
    <lineage>
        <taxon>Bacteria</taxon>
        <taxon>Pseudomonadati</taxon>
        <taxon>Pseudomonadota</taxon>
        <taxon>Alphaproteobacteria</taxon>
        <taxon>Hyphomicrobiales</taxon>
        <taxon>Nitrobacteraceae</taxon>
        <taxon>Bradyrhizobium</taxon>
    </lineage>
</organism>
<feature type="chain" id="PRO_0000208811" description="Uncharacterized protein blr2150">
    <location>
        <begin position="1"/>
        <end position="300"/>
    </location>
</feature>
<feature type="helix" evidence="2">
    <location>
        <begin position="4"/>
        <end position="15"/>
    </location>
</feature>
<feature type="helix" evidence="2">
    <location>
        <begin position="23"/>
        <end position="51"/>
    </location>
</feature>
<feature type="helix" evidence="2">
    <location>
        <begin position="58"/>
        <end position="79"/>
    </location>
</feature>
<feature type="helix" evidence="2">
    <location>
        <begin position="85"/>
        <end position="97"/>
    </location>
</feature>
<feature type="strand" evidence="1">
    <location>
        <begin position="102"/>
        <end position="105"/>
    </location>
</feature>
<feature type="helix" evidence="2">
    <location>
        <begin position="108"/>
        <end position="119"/>
    </location>
</feature>
<feature type="helix" evidence="2">
    <location>
        <begin position="124"/>
        <end position="145"/>
    </location>
</feature>
<feature type="strand" evidence="1">
    <location>
        <begin position="148"/>
        <end position="150"/>
    </location>
</feature>
<feature type="helix" evidence="2">
    <location>
        <begin position="155"/>
        <end position="165"/>
    </location>
</feature>
<feature type="helix" evidence="2">
    <location>
        <begin position="168"/>
        <end position="179"/>
    </location>
</feature>
<feature type="helix" evidence="2">
    <location>
        <begin position="183"/>
        <end position="186"/>
    </location>
</feature>
<feature type="helix" evidence="2">
    <location>
        <begin position="190"/>
        <end position="209"/>
    </location>
</feature>
<feature type="helix" evidence="2">
    <location>
        <begin position="224"/>
        <end position="231"/>
    </location>
</feature>
<feature type="helix" evidence="2">
    <location>
        <begin position="237"/>
        <end position="258"/>
    </location>
</feature>
<feature type="helix" evidence="2">
    <location>
        <begin position="265"/>
        <end position="274"/>
    </location>
</feature>
<feature type="helix" evidence="1">
    <location>
        <begin position="277"/>
        <end position="280"/>
    </location>
</feature>
<protein>
    <recommendedName>
        <fullName>Uncharacterized protein blr2150</fullName>
    </recommendedName>
    <alternativeName>
        <fullName>ORF8</fullName>
    </alternativeName>
</protein>
<proteinExistence type="evidence at protein level"/>
<name>Y2150_BRADU</name>
<keyword id="KW-0002">3D-structure</keyword>
<keyword id="KW-1185">Reference proteome</keyword>
<sequence length="300" mass="33380">MIQTERAVQQVLEWGRSLTGFADEHAVEAVRGGQYILQRIHPSLRGTSARTGRDPQDETLIVTFYRELALLFWLDDCNDLGLISPEQLAAVEQALGQGVPCALPGFEGCAVLRASLATLAYDRRDYAQLLDDTRCYSAALRAGHAQAVAAERWSYAEYLHNGIDSIAYANVFCCLSLLWGLDMATLRARPAFRQVLRLISAIGRLQNDLHGCDKDRSAGEADNAVILLLQRYPAMPVVEFLNDELAGHTRMLHRVMAEERFPAPWGPLIEAMAAIRVQYYRTSTSRYRSDAVRGGQRAPA</sequence>